<name>CNO10_RAT</name>
<keyword id="KW-0007">Acetylation</keyword>
<keyword id="KW-0963">Cytoplasm</keyword>
<keyword id="KW-0539">Nucleus</keyword>
<keyword id="KW-1185">Reference proteome</keyword>
<keyword id="KW-0943">RNA-mediated gene silencing</keyword>
<keyword id="KW-0804">Transcription</keyword>
<keyword id="KW-0805">Transcription regulation</keyword>
<keyword id="KW-0810">Translation regulation</keyword>
<proteinExistence type="evidence at transcript level"/>
<evidence type="ECO:0000250" key="1"/>
<evidence type="ECO:0000250" key="2">
    <source>
        <dbReference type="UniProtKB" id="Q9H9A5"/>
    </source>
</evidence>
<evidence type="ECO:0000256" key="3">
    <source>
        <dbReference type="SAM" id="MobiDB-lite"/>
    </source>
</evidence>
<evidence type="ECO:0000305" key="4"/>
<dbReference type="EMBL" id="BC083782">
    <property type="protein sequence ID" value="AAH83782.1"/>
    <property type="molecule type" value="mRNA"/>
</dbReference>
<dbReference type="RefSeq" id="NP_001007004.1">
    <property type="nucleotide sequence ID" value="NM_001007003.1"/>
</dbReference>
<dbReference type="SMR" id="Q5XIA4"/>
<dbReference type="FunCoup" id="Q5XIA4">
    <property type="interactions" value="4526"/>
</dbReference>
<dbReference type="STRING" id="10116.ENSRNOP00000074139"/>
<dbReference type="PhosphoSitePlus" id="Q5XIA4"/>
<dbReference type="jPOST" id="Q5XIA4"/>
<dbReference type="PaxDb" id="10116-ENSRNOP00000013817"/>
<dbReference type="GeneID" id="316034"/>
<dbReference type="KEGG" id="rno:316034"/>
<dbReference type="UCSC" id="RGD:1359219">
    <property type="organism name" value="rat"/>
</dbReference>
<dbReference type="AGR" id="RGD:1359219"/>
<dbReference type="CTD" id="25904"/>
<dbReference type="RGD" id="1359219">
    <property type="gene designation" value="Cnot10"/>
</dbReference>
<dbReference type="eggNOG" id="KOG2471">
    <property type="taxonomic scope" value="Eukaryota"/>
</dbReference>
<dbReference type="InParanoid" id="Q5XIA4"/>
<dbReference type="PhylomeDB" id="Q5XIA4"/>
<dbReference type="TreeFam" id="TF323368"/>
<dbReference type="Reactome" id="R-RNO-6804115">
    <property type="pathway name" value="TP53 regulates transcription of additional cell cycle genes whose exact role in the p53 pathway remain uncertain"/>
</dbReference>
<dbReference type="PRO" id="PR:Q5XIA4"/>
<dbReference type="Proteomes" id="UP000002494">
    <property type="component" value="Unplaced"/>
</dbReference>
<dbReference type="GO" id="GO:0030014">
    <property type="term" value="C:CCR4-NOT complex"/>
    <property type="evidence" value="ECO:0000250"/>
    <property type="project" value="UniProtKB"/>
</dbReference>
<dbReference type="GO" id="GO:0005737">
    <property type="term" value="C:cytoplasm"/>
    <property type="evidence" value="ECO:0007669"/>
    <property type="project" value="UniProtKB-SubCell"/>
</dbReference>
<dbReference type="GO" id="GO:0005634">
    <property type="term" value="C:nucleus"/>
    <property type="evidence" value="ECO:0007669"/>
    <property type="project" value="UniProtKB-SubCell"/>
</dbReference>
<dbReference type="GO" id="GO:0006402">
    <property type="term" value="P:mRNA catabolic process"/>
    <property type="evidence" value="ECO:0000318"/>
    <property type="project" value="GO_Central"/>
</dbReference>
<dbReference type="GO" id="GO:0017148">
    <property type="term" value="P:negative regulation of translation"/>
    <property type="evidence" value="ECO:0000318"/>
    <property type="project" value="GO_Central"/>
</dbReference>
<dbReference type="GO" id="GO:0031047">
    <property type="term" value="P:regulatory ncRNA-mediated gene silencing"/>
    <property type="evidence" value="ECO:0007669"/>
    <property type="project" value="UniProtKB-KW"/>
</dbReference>
<dbReference type="FunFam" id="1.25.40.10:FF:000092">
    <property type="entry name" value="CCR4-NOT transcription complex subunit 10 isoform X1"/>
    <property type="match status" value="1"/>
</dbReference>
<dbReference type="Gene3D" id="1.25.40.10">
    <property type="entry name" value="Tetratricopeptide repeat domain"/>
    <property type="match status" value="2"/>
</dbReference>
<dbReference type="InterPro" id="IPR039740">
    <property type="entry name" value="CNOT10"/>
</dbReference>
<dbReference type="InterPro" id="IPR011990">
    <property type="entry name" value="TPR-like_helical_dom_sf"/>
</dbReference>
<dbReference type="InterPro" id="IPR019734">
    <property type="entry name" value="TPR_rpt"/>
</dbReference>
<dbReference type="PANTHER" id="PTHR12979">
    <property type="entry name" value="CCR4-NOT TRANSCRIPTION COMPLEX SUBUNIT 10"/>
    <property type="match status" value="1"/>
</dbReference>
<dbReference type="PANTHER" id="PTHR12979:SF5">
    <property type="entry name" value="CCR4-NOT TRANSCRIPTION COMPLEX SUBUNIT 10"/>
    <property type="match status" value="1"/>
</dbReference>
<dbReference type="SMART" id="SM00028">
    <property type="entry name" value="TPR"/>
    <property type="match status" value="4"/>
</dbReference>
<dbReference type="SUPFAM" id="SSF48452">
    <property type="entry name" value="TPR-like"/>
    <property type="match status" value="1"/>
</dbReference>
<comment type="function">
    <text evidence="1">Component of the CCR4-NOT complex which is one of the major cellular mRNA deadenylases and is linked to various cellular processes including bulk mRNA degradation, miRNA-mediated repression, translational repression during translational initiation and general transcription regulation. Additional complex functions may be a consequence of its influence on mRNA expression. Is not required for association of CNOT7 to the CCR4-NOT complex (By similarity).</text>
</comment>
<comment type="subunit">
    <text evidence="1">Component of the CCR4-NOT complex; distinct complexes seem to exist that differ in the participation of probably mutually exclusive catalytic subunits. CNOT10 and CNOT11 form a subcomplex docked to the CNOT1 scaffold (By similarity).</text>
</comment>
<comment type="subcellular location">
    <subcellularLocation>
        <location evidence="1">Cytoplasm</location>
    </subcellularLocation>
    <subcellularLocation>
        <location evidence="1">Nucleus</location>
    </subcellularLocation>
</comment>
<comment type="similarity">
    <text evidence="4">Belongs to the CNOT10 family.</text>
</comment>
<accession>Q5XIA4</accession>
<organism>
    <name type="scientific">Rattus norvegicus</name>
    <name type="common">Rat</name>
    <dbReference type="NCBI Taxonomy" id="10116"/>
    <lineage>
        <taxon>Eukaryota</taxon>
        <taxon>Metazoa</taxon>
        <taxon>Chordata</taxon>
        <taxon>Craniata</taxon>
        <taxon>Vertebrata</taxon>
        <taxon>Euteleostomi</taxon>
        <taxon>Mammalia</taxon>
        <taxon>Eutheria</taxon>
        <taxon>Euarchontoglires</taxon>
        <taxon>Glires</taxon>
        <taxon>Rodentia</taxon>
        <taxon>Myomorpha</taxon>
        <taxon>Muroidea</taxon>
        <taxon>Muridae</taxon>
        <taxon>Murinae</taxon>
        <taxon>Rattus</taxon>
    </lineage>
</organism>
<reference key="1">
    <citation type="journal article" date="2004" name="Genome Res.">
        <title>The status, quality, and expansion of the NIH full-length cDNA project: the Mammalian Gene Collection (MGC).</title>
        <authorList>
            <consortium name="The MGC Project Team"/>
        </authorList>
    </citation>
    <scope>NUCLEOTIDE SEQUENCE [LARGE SCALE MRNA]</scope>
    <source>
        <tissue>Lung</tissue>
    </source>
</reference>
<feature type="initiator methionine" description="Removed" evidence="2">
    <location>
        <position position="1"/>
    </location>
</feature>
<feature type="chain" id="PRO_0000314582" description="CCR4-NOT transcription complex subunit 10">
    <location>
        <begin position="2"/>
        <end position="744"/>
    </location>
</feature>
<feature type="region of interest" description="Disordered" evidence="3">
    <location>
        <begin position="1"/>
        <end position="26"/>
    </location>
</feature>
<feature type="region of interest" description="Disordered" evidence="3">
    <location>
        <begin position="183"/>
        <end position="204"/>
    </location>
</feature>
<feature type="region of interest" description="Disordered" evidence="3">
    <location>
        <begin position="475"/>
        <end position="522"/>
    </location>
</feature>
<feature type="region of interest" description="Disordered" evidence="3">
    <location>
        <begin position="602"/>
        <end position="632"/>
    </location>
</feature>
<feature type="compositionally biased region" description="Basic and acidic residues" evidence="3">
    <location>
        <begin position="1"/>
        <end position="16"/>
    </location>
</feature>
<feature type="compositionally biased region" description="Polar residues" evidence="3">
    <location>
        <begin position="183"/>
        <end position="200"/>
    </location>
</feature>
<feature type="compositionally biased region" description="Low complexity" evidence="3">
    <location>
        <begin position="496"/>
        <end position="506"/>
    </location>
</feature>
<feature type="compositionally biased region" description="Polar residues" evidence="3">
    <location>
        <begin position="602"/>
        <end position="612"/>
    </location>
</feature>
<feature type="modified residue" description="N-acetylalanine" evidence="2">
    <location>
        <position position="2"/>
    </location>
</feature>
<sequence length="744" mass="81819">MAADKPADQGAEKHEGAGQSSGVTDQEKELSTSAFQAFTSGNYDACLQHLACLQDINKDDYKIILNTAVAEFFKNNQTTTDNLRQTLNQLKNQVHSAVEEMDGLDDVENSMLYYNQAVILYHLRQHTEAIAVGEKLYQFIEPFEEKFAQAVCFLLVDLYILTHQAEKALHLLAVLEKMISQGSGNKNGKSETGNNSSKDGSNPKAESAALIEAAKSKIHQYKVRGYIQMKSLKACKREIKSVMNTAGNSAPSLFLKSNFEYLRGNYRKAVKLLNSSNIAEHPGFMKTGECLRCMFWNNLGCIHFAMSKHNLGIFYFKKALQENDNVCAQLSAGNTDPGKKFSGRPMCTLLANKRYELLYNCGIQLLHVGRPLAAFECLVEAVQVYHANPRLWLRLAECCIAANKGTSEQETKGLPTKKGIVQSIVGQGYHRKIVLASQSIQNTVYNDGQSSAIPVASVEFAAICLRNALLLLPEEQQDPKQENGSKSSSQLGGNAESSESSETCSSKSHDGDKLIPAPPSSPLRKQELENLKCSILACSAYVALALGDNLMALNHADQLLQQPKLSGSLKFLGHLYAAEALISLDRISDAITHLNPENVTDVSLGISSNEQDQGSDKGENEAMESSGKRAPQCYPSSVNSARTVMLFNLGSAYCLRSEYDKARKCLHQAASMIHPKEVPPEAILLAVYLELQNGNTQLALQMIKRNQLLPAVKAHSDVRKKTVFQPVHPIQPIQMPAFTTVQRK</sequence>
<protein>
    <recommendedName>
        <fullName>CCR4-NOT transcription complex subunit 10</fullName>
    </recommendedName>
</protein>
<gene>
    <name type="primary">Cnot10</name>
</gene>